<gene>
    <name type="primary">BHLH63</name>
    <name type="synonym">CIB1</name>
    <name type="synonym">EN84</name>
    <name type="ordered locus">At4g34530</name>
    <name type="ORF">T4L20.110</name>
</gene>
<protein>
    <recommendedName>
        <fullName>Transcription factor bHLH63</fullName>
    </recommendedName>
    <alternativeName>
        <fullName>Basic helix-loop-helix protein 63</fullName>
        <shortName>AtbHLH63</shortName>
        <shortName>bHLH 63</shortName>
    </alternativeName>
    <alternativeName>
        <fullName>Protein CRYPTOCHROME INTERACTING BASIC-HELIX-LOOP-HELIX 1</fullName>
    </alternativeName>
    <alternativeName>
        <fullName>Transcription factor EN 84</fullName>
    </alternativeName>
    <alternativeName>
        <fullName>bHLH transcription factor bHLH063</fullName>
    </alternativeName>
</protein>
<feature type="chain" id="PRO_0000358758" description="Transcription factor bHLH63">
    <location>
        <begin position="1"/>
        <end position="335"/>
    </location>
</feature>
<feature type="domain" description="bHLH" evidence="1">
    <location>
        <begin position="178"/>
        <end position="228"/>
    </location>
</feature>
<feature type="region of interest" description="Disordered" evidence="2">
    <location>
        <begin position="110"/>
        <end position="160"/>
    </location>
</feature>
<feature type="sequence conflict" description="In Ref. 5; AAM53299." evidence="12" ref="5">
    <original>L</original>
    <variation>F</variation>
    <location>
        <position position="86"/>
    </location>
</feature>
<feature type="sequence conflict" description="In Ref. 1; AAM10952." evidence="12" ref="1">
    <original>M</original>
    <variation>V</variation>
    <location>
        <position position="110"/>
    </location>
</feature>
<dbReference type="EMBL" id="AF488596">
    <property type="protein sequence ID" value="AAM10952.1"/>
    <property type="molecule type" value="mRNA"/>
</dbReference>
<dbReference type="EMBL" id="AL023094">
    <property type="protein sequence ID" value="CAA18832.1"/>
    <property type="status" value="ALT_SEQ"/>
    <property type="molecule type" value="Genomic_DNA"/>
</dbReference>
<dbReference type="EMBL" id="AL161585">
    <property type="protein sequence ID" value="CAB80170.1"/>
    <property type="status" value="ALT_SEQ"/>
    <property type="molecule type" value="Genomic_DNA"/>
</dbReference>
<dbReference type="EMBL" id="CP002687">
    <property type="protein sequence ID" value="AEE86389.1"/>
    <property type="molecule type" value="Genomic_DNA"/>
</dbReference>
<dbReference type="EMBL" id="AK117846">
    <property type="protein sequence ID" value="BAC42487.1"/>
    <property type="molecule type" value="mRNA"/>
</dbReference>
<dbReference type="EMBL" id="AY120741">
    <property type="protein sequence ID" value="AAM53299.1"/>
    <property type="molecule type" value="mRNA"/>
</dbReference>
<dbReference type="EMBL" id="BT005313">
    <property type="protein sequence ID" value="AAO63377.1"/>
    <property type="molecule type" value="mRNA"/>
</dbReference>
<dbReference type="PIR" id="T05273">
    <property type="entry name" value="T05273"/>
</dbReference>
<dbReference type="RefSeq" id="NP_195179.2">
    <property type="nucleotide sequence ID" value="NM_119618.3"/>
</dbReference>
<dbReference type="SMR" id="Q8GY61"/>
<dbReference type="BioGRID" id="14886">
    <property type="interactions" value="41"/>
</dbReference>
<dbReference type="DIP" id="DIP-59356N"/>
<dbReference type="FunCoup" id="Q8GY61">
    <property type="interactions" value="114"/>
</dbReference>
<dbReference type="IntAct" id="Q8GY61">
    <property type="interactions" value="48"/>
</dbReference>
<dbReference type="STRING" id="3702.Q8GY61"/>
<dbReference type="PaxDb" id="3702-AT4G34530.1"/>
<dbReference type="EnsemblPlants" id="AT4G34530.1">
    <property type="protein sequence ID" value="AT4G34530.1"/>
    <property type="gene ID" value="AT4G34530"/>
</dbReference>
<dbReference type="GeneID" id="829604"/>
<dbReference type="Gramene" id="AT4G34530.1">
    <property type="protein sequence ID" value="AT4G34530.1"/>
    <property type="gene ID" value="AT4G34530"/>
</dbReference>
<dbReference type="KEGG" id="ath:AT4G34530"/>
<dbReference type="Araport" id="AT4G34530"/>
<dbReference type="TAIR" id="AT4G34530">
    <property type="gene designation" value="CIB1"/>
</dbReference>
<dbReference type="eggNOG" id="ENOG502QT6X">
    <property type="taxonomic scope" value="Eukaryota"/>
</dbReference>
<dbReference type="HOGENOM" id="CLU_025018_1_0_1"/>
<dbReference type="InParanoid" id="Q8GY61"/>
<dbReference type="OMA" id="APSMWDS"/>
<dbReference type="PhylomeDB" id="Q8GY61"/>
<dbReference type="PRO" id="PR:Q8GY61"/>
<dbReference type="Proteomes" id="UP000006548">
    <property type="component" value="Chromosome 4"/>
</dbReference>
<dbReference type="GO" id="GO:0005634">
    <property type="term" value="C:nucleus"/>
    <property type="evidence" value="ECO:0000314"/>
    <property type="project" value="TAIR"/>
</dbReference>
<dbReference type="GO" id="GO:0003677">
    <property type="term" value="F:DNA binding"/>
    <property type="evidence" value="ECO:0000314"/>
    <property type="project" value="TAIR"/>
</dbReference>
<dbReference type="GO" id="GO:0003700">
    <property type="term" value="F:DNA-binding transcription factor activity"/>
    <property type="evidence" value="ECO:0000314"/>
    <property type="project" value="TAIR"/>
</dbReference>
<dbReference type="GO" id="GO:0046983">
    <property type="term" value="F:protein dimerization activity"/>
    <property type="evidence" value="ECO:0007669"/>
    <property type="project" value="InterPro"/>
</dbReference>
<dbReference type="GO" id="GO:0006351">
    <property type="term" value="P:DNA-templated transcription"/>
    <property type="evidence" value="ECO:0000314"/>
    <property type="project" value="TAIR"/>
</dbReference>
<dbReference type="GO" id="GO:0009908">
    <property type="term" value="P:flower development"/>
    <property type="evidence" value="ECO:0007669"/>
    <property type="project" value="UniProtKB-KW"/>
</dbReference>
<dbReference type="GO" id="GO:0045824">
    <property type="term" value="P:negative regulation of innate immune response"/>
    <property type="evidence" value="ECO:0000315"/>
    <property type="project" value="TAIR"/>
</dbReference>
<dbReference type="GO" id="GO:0009911">
    <property type="term" value="P:positive regulation of flower development"/>
    <property type="evidence" value="ECO:0000315"/>
    <property type="project" value="TAIR"/>
</dbReference>
<dbReference type="GO" id="GO:0009637">
    <property type="term" value="P:response to blue light"/>
    <property type="evidence" value="ECO:0000314"/>
    <property type="project" value="UniProtKB"/>
</dbReference>
<dbReference type="CDD" id="cd18919">
    <property type="entry name" value="bHLH_AtBPE_like"/>
    <property type="match status" value="1"/>
</dbReference>
<dbReference type="FunFam" id="4.10.280.10:FF:000002">
    <property type="entry name" value="Basic helix-loop-helix transcription factor"/>
    <property type="match status" value="1"/>
</dbReference>
<dbReference type="Gene3D" id="4.10.280.10">
    <property type="entry name" value="Helix-loop-helix DNA-binding domain"/>
    <property type="match status" value="1"/>
</dbReference>
<dbReference type="InterPro" id="IPR011598">
    <property type="entry name" value="bHLH_dom"/>
</dbReference>
<dbReference type="InterPro" id="IPR024097">
    <property type="entry name" value="bHLH_ZIP_TF"/>
</dbReference>
<dbReference type="InterPro" id="IPR036638">
    <property type="entry name" value="HLH_DNA-bd_sf"/>
</dbReference>
<dbReference type="PANTHER" id="PTHR12565">
    <property type="entry name" value="STEROL REGULATORY ELEMENT-BINDING PROTEIN"/>
    <property type="match status" value="1"/>
</dbReference>
<dbReference type="PANTHER" id="PTHR12565:SF467">
    <property type="entry name" value="TRANSCRIPTION FACTOR BHLH63"/>
    <property type="match status" value="1"/>
</dbReference>
<dbReference type="Pfam" id="PF00010">
    <property type="entry name" value="HLH"/>
    <property type="match status" value="1"/>
</dbReference>
<dbReference type="SMART" id="SM00353">
    <property type="entry name" value="HLH"/>
    <property type="match status" value="1"/>
</dbReference>
<dbReference type="SUPFAM" id="SSF47459">
    <property type="entry name" value="HLH, helix-loop-helix DNA-binding domain"/>
    <property type="match status" value="1"/>
</dbReference>
<dbReference type="PROSITE" id="PS50888">
    <property type="entry name" value="BHLH"/>
    <property type="match status" value="1"/>
</dbReference>
<proteinExistence type="evidence at protein level"/>
<name>BH063_ARATH</name>
<comment type="function">
    <text evidence="4 8">Transcription factor that binds DNA to G box 5'-CACGTG-3' and, to a lower extent, to E-box 5'-CANNTG-3' in vitro. Binds to chromatin DNA of the FT gene and promotes its expression, and thus triggers flowering in response to blue light.</text>
</comment>
<comment type="subunit">
    <text evidence="4 6 8 10 12">Homodimer (Probable). Interacts with IBH1 (PubMed:23161888). Binds reversibly to CRY2 after blue light illumination (PubMed:18988809, PubMed:24130508, PubMed:24780222).</text>
</comment>
<comment type="interaction">
    <interactant intactId="EBI-4469930">
        <id>Q8GY61</id>
    </interactant>
    <interactant intactId="EBI-4434374">
        <id>Q9C8Z9</id>
        <label>BHLH148</label>
    </interactant>
    <organismsDiffer>false</organismsDiffer>
    <experiments>3</experiments>
</comment>
<comment type="interaction">
    <interactant intactId="EBI-4469930">
        <id>Q8GY61</id>
    </interactant>
    <interactant intactId="EBI-531555">
        <id>Q96524</id>
        <label>CRY2</label>
    </interactant>
    <organismsDiffer>false</organismsDiffer>
    <experiments>3</experiments>
</comment>
<comment type="interaction">
    <interactant intactId="EBI-4469930">
        <id>Q8GY61</id>
    </interactant>
    <interactant intactId="EBI-4433589">
        <id>Q9SKX1</id>
        <label>IBH1</label>
    </interactant>
    <organismsDiffer>false</organismsDiffer>
    <experiments>3</experiments>
</comment>
<comment type="interaction">
    <interactant intactId="EBI-4469930">
        <id>Q8GY61</id>
    </interactant>
    <interactant intactId="EBI-15193025">
        <id>Q9LXU1</id>
        <label>NOT9B</label>
    </interactant>
    <organismsDiffer>false</organismsDiffer>
    <experiments>3</experiments>
</comment>
<comment type="subcellular location">
    <subcellularLocation>
        <location evidence="1 4">Nucleus</location>
    </subcellularLocation>
</comment>
<comment type="tissue specificity">
    <text evidence="3">Expressed constitutively in roots, leaves, and stems.</text>
</comment>
<comment type="induction">
    <text evidence="7">Accumulates strongly in response to blue light due to reduced preventing 26S proteasome-mediated degradation in an ADO1/ZTL and ADO2/LKP2 dependent manner, but levels decrease in the absence of blue light via 26S proteasome degradation (at protein level).</text>
</comment>
<comment type="biotechnology">
    <text evidence="5 9 11">The blue light-mediated interaction between CRY2 and BHLH63/CIB1 is used to design an optogenetic control of target proteins or organelles.</text>
</comment>
<comment type="sequence caution" evidence="12">
    <conflict type="erroneous gene model prediction">
        <sequence resource="EMBL-CDS" id="CAA18832"/>
    </conflict>
</comment>
<comment type="sequence caution" evidence="12">
    <conflict type="erroneous gene model prediction">
        <sequence resource="EMBL-CDS" id="CAB80170"/>
    </conflict>
</comment>
<accession>Q8GY61</accession>
<accession>O65678</accession>
<accession>Q8L851</accession>
<accession>Q8S3D9</accession>
<evidence type="ECO:0000255" key="1">
    <source>
        <dbReference type="PROSITE-ProRule" id="PRU00981"/>
    </source>
</evidence>
<evidence type="ECO:0000256" key="2">
    <source>
        <dbReference type="SAM" id="MobiDB-lite"/>
    </source>
</evidence>
<evidence type="ECO:0000269" key="3">
    <source>
    </source>
</evidence>
<evidence type="ECO:0000269" key="4">
    <source>
    </source>
</evidence>
<evidence type="ECO:0000269" key="5">
    <source>
    </source>
</evidence>
<evidence type="ECO:0000269" key="6">
    <source>
    </source>
</evidence>
<evidence type="ECO:0000269" key="7">
    <source>
    </source>
</evidence>
<evidence type="ECO:0000269" key="8">
    <source>
    </source>
</evidence>
<evidence type="ECO:0000269" key="9">
    <source>
    </source>
</evidence>
<evidence type="ECO:0000269" key="10">
    <source>
    </source>
</evidence>
<evidence type="ECO:0000269" key="11">
    <source>
    </source>
</evidence>
<evidence type="ECO:0000305" key="12"/>
<organism>
    <name type="scientific">Arabidopsis thaliana</name>
    <name type="common">Mouse-ear cress</name>
    <dbReference type="NCBI Taxonomy" id="3702"/>
    <lineage>
        <taxon>Eukaryota</taxon>
        <taxon>Viridiplantae</taxon>
        <taxon>Streptophyta</taxon>
        <taxon>Embryophyta</taxon>
        <taxon>Tracheophyta</taxon>
        <taxon>Spermatophyta</taxon>
        <taxon>Magnoliopsida</taxon>
        <taxon>eudicotyledons</taxon>
        <taxon>Gunneridae</taxon>
        <taxon>Pentapetalae</taxon>
        <taxon>rosids</taxon>
        <taxon>malvids</taxon>
        <taxon>Brassicales</taxon>
        <taxon>Brassicaceae</taxon>
        <taxon>Camelineae</taxon>
        <taxon>Arabidopsis</taxon>
    </lineage>
</organism>
<keyword id="KW-0010">Activator</keyword>
<keyword id="KW-0238">DNA-binding</keyword>
<keyword id="KW-0287">Flowering</keyword>
<keyword id="KW-0539">Nucleus</keyword>
<keyword id="KW-1185">Reference proteome</keyword>
<keyword id="KW-0804">Transcription</keyword>
<keyword id="KW-0805">Transcription regulation</keyword>
<reference key="1">
    <citation type="journal article" date="2003" name="Mol. Biol. Evol.">
        <title>The basic helix-loop-helix transcription factor family in plants: a genome-wide study of protein structure and functional diversity.</title>
        <authorList>
            <person name="Heim M.A."/>
            <person name="Jakoby M."/>
            <person name="Werber M."/>
            <person name="Martin C."/>
            <person name="Weisshaar B."/>
            <person name="Bailey P.C."/>
        </authorList>
    </citation>
    <scope>NUCLEOTIDE SEQUENCE [MRNA]</scope>
    <scope>TISSUE SPECIFICITY</scope>
    <scope>GENE FAMILY</scope>
    <scope>NOMENCLATURE</scope>
    <source>
        <strain>cv. Columbia</strain>
    </source>
</reference>
<reference key="2">
    <citation type="journal article" date="1999" name="Nature">
        <title>Sequence and analysis of chromosome 4 of the plant Arabidopsis thaliana.</title>
        <authorList>
            <person name="Mayer K.F.X."/>
            <person name="Schueller C."/>
            <person name="Wambutt R."/>
            <person name="Murphy G."/>
            <person name="Volckaert G."/>
            <person name="Pohl T."/>
            <person name="Duesterhoeft A."/>
            <person name="Stiekema W."/>
            <person name="Entian K.-D."/>
            <person name="Terryn N."/>
            <person name="Harris B."/>
            <person name="Ansorge W."/>
            <person name="Brandt P."/>
            <person name="Grivell L.A."/>
            <person name="Rieger M."/>
            <person name="Weichselgartner M."/>
            <person name="de Simone V."/>
            <person name="Obermaier B."/>
            <person name="Mache R."/>
            <person name="Mueller M."/>
            <person name="Kreis M."/>
            <person name="Delseny M."/>
            <person name="Puigdomenech P."/>
            <person name="Watson M."/>
            <person name="Schmidtheini T."/>
            <person name="Reichert B."/>
            <person name="Portetelle D."/>
            <person name="Perez-Alonso M."/>
            <person name="Boutry M."/>
            <person name="Bancroft I."/>
            <person name="Vos P."/>
            <person name="Hoheisel J."/>
            <person name="Zimmermann W."/>
            <person name="Wedler H."/>
            <person name="Ridley P."/>
            <person name="Langham S.-A."/>
            <person name="McCullagh B."/>
            <person name="Bilham L."/>
            <person name="Robben J."/>
            <person name="van der Schueren J."/>
            <person name="Grymonprez B."/>
            <person name="Chuang Y.-J."/>
            <person name="Vandenbussche F."/>
            <person name="Braeken M."/>
            <person name="Weltjens I."/>
            <person name="Voet M."/>
            <person name="Bastiaens I."/>
            <person name="Aert R."/>
            <person name="Defoor E."/>
            <person name="Weitzenegger T."/>
            <person name="Bothe G."/>
            <person name="Ramsperger U."/>
            <person name="Hilbert H."/>
            <person name="Braun M."/>
            <person name="Holzer E."/>
            <person name="Brandt A."/>
            <person name="Peters S."/>
            <person name="van Staveren M."/>
            <person name="Dirkse W."/>
            <person name="Mooijman P."/>
            <person name="Klein Lankhorst R."/>
            <person name="Rose M."/>
            <person name="Hauf J."/>
            <person name="Koetter P."/>
            <person name="Berneiser S."/>
            <person name="Hempel S."/>
            <person name="Feldpausch M."/>
            <person name="Lamberth S."/>
            <person name="Van den Daele H."/>
            <person name="De Keyser A."/>
            <person name="Buysshaert C."/>
            <person name="Gielen J."/>
            <person name="Villarroel R."/>
            <person name="De Clercq R."/>
            <person name="van Montagu M."/>
            <person name="Rogers J."/>
            <person name="Cronin A."/>
            <person name="Quail M.A."/>
            <person name="Bray-Allen S."/>
            <person name="Clark L."/>
            <person name="Doggett J."/>
            <person name="Hall S."/>
            <person name="Kay M."/>
            <person name="Lennard N."/>
            <person name="McLay K."/>
            <person name="Mayes R."/>
            <person name="Pettett A."/>
            <person name="Rajandream M.A."/>
            <person name="Lyne M."/>
            <person name="Benes V."/>
            <person name="Rechmann S."/>
            <person name="Borkova D."/>
            <person name="Bloecker H."/>
            <person name="Scharfe M."/>
            <person name="Grimm M."/>
            <person name="Loehnert T.-H."/>
            <person name="Dose S."/>
            <person name="de Haan M."/>
            <person name="Maarse A.C."/>
            <person name="Schaefer M."/>
            <person name="Mueller-Auer S."/>
            <person name="Gabel C."/>
            <person name="Fuchs M."/>
            <person name="Fartmann B."/>
            <person name="Granderath K."/>
            <person name="Dauner D."/>
            <person name="Herzl A."/>
            <person name="Neumann S."/>
            <person name="Argiriou A."/>
            <person name="Vitale D."/>
            <person name="Liguori R."/>
            <person name="Piravandi E."/>
            <person name="Massenet O."/>
            <person name="Quigley F."/>
            <person name="Clabauld G."/>
            <person name="Muendlein A."/>
            <person name="Felber R."/>
            <person name="Schnabl S."/>
            <person name="Hiller R."/>
            <person name="Schmidt W."/>
            <person name="Lecharny A."/>
            <person name="Aubourg S."/>
            <person name="Chefdor F."/>
            <person name="Cooke R."/>
            <person name="Berger C."/>
            <person name="Monfort A."/>
            <person name="Casacuberta E."/>
            <person name="Gibbons T."/>
            <person name="Weber N."/>
            <person name="Vandenbol M."/>
            <person name="Bargues M."/>
            <person name="Terol J."/>
            <person name="Torres A."/>
            <person name="Perez-Perez A."/>
            <person name="Purnelle B."/>
            <person name="Bent E."/>
            <person name="Johnson S."/>
            <person name="Tacon D."/>
            <person name="Jesse T."/>
            <person name="Heijnen L."/>
            <person name="Schwarz S."/>
            <person name="Scholler P."/>
            <person name="Heber S."/>
            <person name="Francs P."/>
            <person name="Bielke C."/>
            <person name="Frishman D."/>
            <person name="Haase D."/>
            <person name="Lemcke K."/>
            <person name="Mewes H.-W."/>
            <person name="Stocker S."/>
            <person name="Zaccaria P."/>
            <person name="Bevan M."/>
            <person name="Wilson R.K."/>
            <person name="de la Bastide M."/>
            <person name="Habermann K."/>
            <person name="Parnell L."/>
            <person name="Dedhia N."/>
            <person name="Gnoj L."/>
            <person name="Schutz K."/>
            <person name="Huang E."/>
            <person name="Spiegel L."/>
            <person name="Sekhon M."/>
            <person name="Murray J."/>
            <person name="Sheet P."/>
            <person name="Cordes M."/>
            <person name="Abu-Threideh J."/>
            <person name="Stoneking T."/>
            <person name="Kalicki J."/>
            <person name="Graves T."/>
            <person name="Harmon G."/>
            <person name="Edwards J."/>
            <person name="Latreille P."/>
            <person name="Courtney L."/>
            <person name="Cloud J."/>
            <person name="Abbott A."/>
            <person name="Scott K."/>
            <person name="Johnson D."/>
            <person name="Minx P."/>
            <person name="Bentley D."/>
            <person name="Fulton B."/>
            <person name="Miller N."/>
            <person name="Greco T."/>
            <person name="Kemp K."/>
            <person name="Kramer J."/>
            <person name="Fulton L."/>
            <person name="Mardis E."/>
            <person name="Dante M."/>
            <person name="Pepin K."/>
            <person name="Hillier L.W."/>
            <person name="Nelson J."/>
            <person name="Spieth J."/>
            <person name="Ryan E."/>
            <person name="Andrews S."/>
            <person name="Geisel C."/>
            <person name="Layman D."/>
            <person name="Du H."/>
            <person name="Ali J."/>
            <person name="Berghoff A."/>
            <person name="Jones K."/>
            <person name="Drone K."/>
            <person name="Cotton M."/>
            <person name="Joshu C."/>
            <person name="Antonoiu B."/>
            <person name="Zidanic M."/>
            <person name="Strong C."/>
            <person name="Sun H."/>
            <person name="Lamar B."/>
            <person name="Yordan C."/>
            <person name="Ma P."/>
            <person name="Zhong J."/>
            <person name="Preston R."/>
            <person name="Vil D."/>
            <person name="Shekher M."/>
            <person name="Matero A."/>
            <person name="Shah R."/>
            <person name="Swaby I.K."/>
            <person name="O'Shaughnessy A."/>
            <person name="Rodriguez M."/>
            <person name="Hoffman J."/>
            <person name="Till S."/>
            <person name="Granat S."/>
            <person name="Shohdy N."/>
            <person name="Hasegawa A."/>
            <person name="Hameed A."/>
            <person name="Lodhi M."/>
            <person name="Johnson A."/>
            <person name="Chen E."/>
            <person name="Marra M.A."/>
            <person name="Martienssen R."/>
            <person name="McCombie W.R."/>
        </authorList>
    </citation>
    <scope>NUCLEOTIDE SEQUENCE [LARGE SCALE GENOMIC DNA]</scope>
    <source>
        <strain>cv. Columbia</strain>
    </source>
</reference>
<reference key="3">
    <citation type="journal article" date="2017" name="Plant J.">
        <title>Araport11: a complete reannotation of the Arabidopsis thaliana reference genome.</title>
        <authorList>
            <person name="Cheng C.Y."/>
            <person name="Krishnakumar V."/>
            <person name="Chan A.P."/>
            <person name="Thibaud-Nissen F."/>
            <person name="Schobel S."/>
            <person name="Town C.D."/>
        </authorList>
    </citation>
    <scope>GENOME REANNOTATION</scope>
    <source>
        <strain>cv. Columbia</strain>
    </source>
</reference>
<reference key="4">
    <citation type="journal article" date="2002" name="Science">
        <title>Functional annotation of a full-length Arabidopsis cDNA collection.</title>
        <authorList>
            <person name="Seki M."/>
            <person name="Narusaka M."/>
            <person name="Kamiya A."/>
            <person name="Ishida J."/>
            <person name="Satou M."/>
            <person name="Sakurai T."/>
            <person name="Nakajima M."/>
            <person name="Enju A."/>
            <person name="Akiyama K."/>
            <person name="Oono Y."/>
            <person name="Muramatsu M."/>
            <person name="Hayashizaki Y."/>
            <person name="Kawai J."/>
            <person name="Carninci P."/>
            <person name="Itoh M."/>
            <person name="Ishii Y."/>
            <person name="Arakawa T."/>
            <person name="Shibata K."/>
            <person name="Shinagawa A."/>
            <person name="Shinozaki K."/>
        </authorList>
    </citation>
    <scope>NUCLEOTIDE SEQUENCE [LARGE SCALE MRNA]</scope>
    <source>
        <strain>cv. Columbia</strain>
    </source>
</reference>
<reference key="5">
    <citation type="journal article" date="2003" name="Science">
        <title>Empirical analysis of transcriptional activity in the Arabidopsis genome.</title>
        <authorList>
            <person name="Yamada K."/>
            <person name="Lim J."/>
            <person name="Dale J.M."/>
            <person name="Chen H."/>
            <person name="Shinn P."/>
            <person name="Palm C.J."/>
            <person name="Southwick A.M."/>
            <person name="Wu H.C."/>
            <person name="Kim C.J."/>
            <person name="Nguyen M."/>
            <person name="Pham P.K."/>
            <person name="Cheuk R.F."/>
            <person name="Karlin-Newmann G."/>
            <person name="Liu S.X."/>
            <person name="Lam B."/>
            <person name="Sakano H."/>
            <person name="Wu T."/>
            <person name="Yu G."/>
            <person name="Miranda M."/>
            <person name="Quach H.L."/>
            <person name="Tripp M."/>
            <person name="Chang C.H."/>
            <person name="Lee J.M."/>
            <person name="Toriumi M.J."/>
            <person name="Chan M.M."/>
            <person name="Tang C.C."/>
            <person name="Onodera C.S."/>
            <person name="Deng J.M."/>
            <person name="Akiyama K."/>
            <person name="Ansari Y."/>
            <person name="Arakawa T."/>
            <person name="Banh J."/>
            <person name="Banno F."/>
            <person name="Bowser L."/>
            <person name="Brooks S.Y."/>
            <person name="Carninci P."/>
            <person name="Chao Q."/>
            <person name="Choy N."/>
            <person name="Enju A."/>
            <person name="Goldsmith A.D."/>
            <person name="Gurjal M."/>
            <person name="Hansen N.F."/>
            <person name="Hayashizaki Y."/>
            <person name="Johnson-Hopson C."/>
            <person name="Hsuan V.W."/>
            <person name="Iida K."/>
            <person name="Karnes M."/>
            <person name="Khan S."/>
            <person name="Koesema E."/>
            <person name="Ishida J."/>
            <person name="Jiang P.X."/>
            <person name="Jones T."/>
            <person name="Kawai J."/>
            <person name="Kamiya A."/>
            <person name="Meyers C."/>
            <person name="Nakajima M."/>
            <person name="Narusaka M."/>
            <person name="Seki M."/>
            <person name="Sakurai T."/>
            <person name="Satou M."/>
            <person name="Tamse R."/>
            <person name="Vaysberg M."/>
            <person name="Wallender E.K."/>
            <person name="Wong C."/>
            <person name="Yamamura Y."/>
            <person name="Yuan S."/>
            <person name="Shinozaki K."/>
            <person name="Davis R.W."/>
            <person name="Theologis A."/>
            <person name="Ecker J.R."/>
        </authorList>
    </citation>
    <scope>NUCLEOTIDE SEQUENCE [LARGE SCALE MRNA]</scope>
    <source>
        <strain>cv. Columbia</strain>
    </source>
</reference>
<reference key="6">
    <citation type="journal article" date="2003" name="Plant Cell">
        <title>The Arabidopsis basic/helix-loop-helix transcription factor family.</title>
        <authorList>
            <person name="Toledo-Ortiz G."/>
            <person name="Huq E."/>
            <person name="Quail P.H."/>
        </authorList>
    </citation>
    <scope>GENE FAMILY</scope>
</reference>
<reference key="7">
    <citation type="journal article" date="2003" name="Plant Cell">
        <title>Update on the basic helix-loop-helix transcription factor gene family in Arabidopsis thaliana.</title>
        <authorList>
            <person name="Bailey P.C."/>
            <person name="Martin C."/>
            <person name="Toledo-Ortiz G."/>
            <person name="Quail P.H."/>
            <person name="Huq E."/>
            <person name="Heim M.A."/>
            <person name="Jakoby M."/>
            <person name="Werber M."/>
            <person name="Weisshaar B."/>
        </authorList>
    </citation>
    <scope>GENE FAMILY</scope>
    <scope>NOMENCLATURE</scope>
</reference>
<reference key="8">
    <citation type="journal article" date="2008" name="Science">
        <title>Photoexcited CRY2 interacts with CIB1 to regulate transcription and floral initiation in Arabidopsis.</title>
        <authorList>
            <person name="Liu H."/>
            <person name="Yu X."/>
            <person name="Li K."/>
            <person name="Klejnot J."/>
            <person name="Yang H."/>
            <person name="Lisiero D."/>
            <person name="Lin C."/>
        </authorList>
    </citation>
    <scope>FUNCTION</scope>
    <scope>INTERACTION WITH CRY2</scope>
    <scope>SUBCELLULAR LOCATION</scope>
</reference>
<reference key="9">
    <citation type="journal article" date="2012" name="Plant Cell">
        <title>A triantagonistic basic helix-loop-helix system regulates cell elongation in Arabidopsis.</title>
        <authorList>
            <person name="Ikeda M."/>
            <person name="Fujiwara S."/>
            <person name="Mitsuda N."/>
            <person name="Ohme-Takagi M."/>
        </authorList>
    </citation>
    <scope>INTERACTION WITH IBH1</scope>
</reference>
<reference key="10">
    <citation type="journal article" date="2012" name="Proc. Natl. Acad. Sci. U.S.A.">
        <title>Optogenetic control of phosphoinositide metabolism.</title>
        <authorList>
            <person name="Idevall-Hagren O."/>
            <person name="Dickson E.J."/>
            <person name="Hille B."/>
            <person name="Toomre D.K."/>
            <person name="De Camilli P."/>
        </authorList>
    </citation>
    <scope>BIOTECHNOLOGY</scope>
</reference>
<reference key="11">
    <citation type="journal article" date="2013" name="PLoS Genet.">
        <title>Multiple bHLH proteins form heterodimers to mediate CRY2-dependent regulation of flowering-time in Arabidopsis.</title>
        <authorList>
            <person name="Liu Y."/>
            <person name="Li X."/>
            <person name="Li K."/>
            <person name="Liu H."/>
            <person name="Lin C."/>
        </authorList>
    </citation>
    <scope>FUNCTION</scope>
    <scope>INTERACTION WITH CRY2</scope>
</reference>
<reference key="12">
    <citation type="journal article" date="2013" name="Proc. Natl. Acad. Sci. U.S.A.">
        <title>Arabidopsis CRY2 and ZTL mediate blue-light regulation of the transcription factor CIB1 by distinct mechanisms.</title>
        <authorList>
            <person name="Liu H."/>
            <person name="Wang Q."/>
            <person name="Liu Y."/>
            <person name="Zhao X."/>
            <person name="Imaizumi T."/>
            <person name="Somers D.E."/>
            <person name="Tobin E.M."/>
            <person name="Lin C."/>
        </authorList>
    </citation>
    <scope>INDUCTION BY BLUE LIGHT</scope>
    <source>
        <strain>cv. Columbia</strain>
    </source>
</reference>
<reference key="13">
    <citation type="journal article" date="2014" name="Anal. Biochem.">
        <title>Quantitative real-time kinetics of optogenetic proteins CRY2 and CIB1/N using single-molecule tools.</title>
        <authorList>
            <person name="Cui Y."/>
            <person name="Choudhury S.R."/>
            <person name="Irudayaraj J."/>
        </authorList>
    </citation>
    <scope>INTERACTION WITH CRY2</scope>
</reference>
<reference key="14">
    <citation type="journal article" date="2014" name="Methods Mol. Biol.">
        <title>Manipulation of plasma membrane phosphoinositides using photoinduced protein-protein interactions.</title>
        <authorList>
            <person name="Idevall-Hagren O."/>
            <person name="Decamilli P."/>
        </authorList>
    </citation>
    <scope>BIOTECHNOLOGY</scope>
</reference>
<reference key="15">
    <citation type="journal article" date="2015" name="Chem. Biol.">
        <title>Optogenetic control of molecular motors and organelle distributions in cells.</title>
        <authorList>
            <person name="Duan L."/>
            <person name="Che D."/>
            <person name="Zhang K."/>
            <person name="Ong Q."/>
            <person name="Guo S."/>
            <person name="Cui B."/>
        </authorList>
    </citation>
    <scope>BIOTECHNOLOGY</scope>
</reference>
<sequence>MNGAIGGDLLLNFPDMSVLERQRAHLKYLNPTFDSPLAGFFADSSMITGGEMDSYLSTAGLNLPMMYGETTVEGDSRLSISPETTLGTGNFKKRKFDTETKDCNEKKKKMTMNRDDLVEEGEEEKSKITEQNNGSTKSIKKMKHKAKKEENNFSNDSSKVTKELEKTDYIHVRARRGQATDSHSIAERVRREKISERMKFLQDLVPGCDKITGKAGMLDEIINYVQSLQRQIEFLSMKLAIVNPRPDFDMDDIFAKEVASTPMTVVPSPEMVLSGYSHEMVHSGYSSEMVNSGYLHVNPMQQVNTSSDPLSCFNNGEAPSMWDSHVQNLYGNLGV</sequence>